<keyword id="KW-1185">Reference proteome</keyword>
<accession>Q3E762</accession>
<accession>D6VQM6</accession>
<sequence>MRNELYQLWCVASAARGVAKSSFVRANSAMCEYVRTSNVLSRWTRDRQWEAAKALSQRVKKEYAAN</sequence>
<name>YB230_YEAST</name>
<protein>
    <recommendedName>
        <fullName evidence="1">Uncharacterized protein YBR230W-A</fullName>
    </recommendedName>
</protein>
<reference key="1">
    <citation type="journal article" date="1994" name="EMBO J.">
        <title>Complete DNA sequence of yeast chromosome II.</title>
        <authorList>
            <person name="Feldmann H."/>
            <person name="Aigle M."/>
            <person name="Aljinovic G."/>
            <person name="Andre B."/>
            <person name="Baclet M.C."/>
            <person name="Barthe C."/>
            <person name="Baur A."/>
            <person name="Becam A.-M."/>
            <person name="Biteau N."/>
            <person name="Boles E."/>
            <person name="Brandt T."/>
            <person name="Brendel M."/>
            <person name="Brueckner M."/>
            <person name="Bussereau F."/>
            <person name="Christiansen C."/>
            <person name="Contreras R."/>
            <person name="Crouzet M."/>
            <person name="Cziepluch C."/>
            <person name="Demolis N."/>
            <person name="Delaveau T."/>
            <person name="Doignon F."/>
            <person name="Domdey H."/>
            <person name="Duesterhus S."/>
            <person name="Dubois E."/>
            <person name="Dujon B."/>
            <person name="El Bakkoury M."/>
            <person name="Entian K.-D."/>
            <person name="Feuermann M."/>
            <person name="Fiers W."/>
            <person name="Fobo G.M."/>
            <person name="Fritz C."/>
            <person name="Gassenhuber J."/>
            <person name="Glansdorff N."/>
            <person name="Goffeau A."/>
            <person name="Grivell L.A."/>
            <person name="de Haan M."/>
            <person name="Hein C."/>
            <person name="Herbert C.J."/>
            <person name="Hollenberg C.P."/>
            <person name="Holmstroem K."/>
            <person name="Jacq C."/>
            <person name="Jacquet M."/>
            <person name="Jauniaux J.-C."/>
            <person name="Jonniaux J.-L."/>
            <person name="Kallesoee T."/>
            <person name="Kiesau P."/>
            <person name="Kirchrath L."/>
            <person name="Koetter P."/>
            <person name="Korol S."/>
            <person name="Liebl S."/>
            <person name="Logghe M."/>
            <person name="Lohan A.J.E."/>
            <person name="Louis E.J."/>
            <person name="Li Z.Y."/>
            <person name="Maat M.J."/>
            <person name="Mallet L."/>
            <person name="Mannhaupt G."/>
            <person name="Messenguy F."/>
            <person name="Miosga T."/>
            <person name="Molemans F."/>
            <person name="Mueller S."/>
            <person name="Nasr F."/>
            <person name="Obermaier B."/>
            <person name="Perea J."/>
            <person name="Pierard A."/>
            <person name="Piravandi E."/>
            <person name="Pohl F.M."/>
            <person name="Pohl T.M."/>
            <person name="Potier S."/>
            <person name="Proft M."/>
            <person name="Purnelle B."/>
            <person name="Ramezani Rad M."/>
            <person name="Rieger M."/>
            <person name="Rose M."/>
            <person name="Schaaff-Gerstenschlaeger I."/>
            <person name="Scherens B."/>
            <person name="Schwarzlose C."/>
            <person name="Skala J."/>
            <person name="Slonimski P.P."/>
            <person name="Smits P.H.M."/>
            <person name="Souciet J.-L."/>
            <person name="Steensma H.Y."/>
            <person name="Stucka R."/>
            <person name="Urrestarazu L.A."/>
            <person name="van der Aart Q.J.M."/>
            <person name="Van Dyck L."/>
            <person name="Vassarotti A."/>
            <person name="Vetter I."/>
            <person name="Vierendeels F."/>
            <person name="Vissers S."/>
            <person name="Wagner G."/>
            <person name="de Wergifosse P."/>
            <person name="Wolfe K.H."/>
            <person name="Zagulski M."/>
            <person name="Zimmermann F.K."/>
            <person name="Mewes H.-W."/>
            <person name="Kleine K."/>
        </authorList>
    </citation>
    <scope>NUCLEOTIDE SEQUENCE [LARGE SCALE GENOMIC DNA]</scope>
    <source>
        <strain>ATCC 204508 / S288c</strain>
    </source>
</reference>
<reference key="2">
    <citation type="journal article" date="2014" name="G3 (Bethesda)">
        <title>The reference genome sequence of Saccharomyces cerevisiae: Then and now.</title>
        <authorList>
            <person name="Engel S.R."/>
            <person name="Dietrich F.S."/>
            <person name="Fisk D.G."/>
            <person name="Binkley G."/>
            <person name="Balakrishnan R."/>
            <person name="Costanzo M.C."/>
            <person name="Dwight S.S."/>
            <person name="Hitz B.C."/>
            <person name="Karra K."/>
            <person name="Nash R.S."/>
            <person name="Weng S."/>
            <person name="Wong E.D."/>
            <person name="Lloyd P."/>
            <person name="Skrzypek M.S."/>
            <person name="Miyasato S.R."/>
            <person name="Simison M."/>
            <person name="Cherry J.M."/>
        </authorList>
    </citation>
    <scope>GENOME REANNOTATION</scope>
    <source>
        <strain>ATCC 204508 / S288c</strain>
    </source>
</reference>
<reference key="3">
    <citation type="journal article" date="2018" name="J. Proteome Res.">
        <title>Enrichment-based proteogenomics identifies microproteins, missing proteins, and novel smORFs in Saccharomyces cerevisiae.</title>
        <authorList>
            <person name="He C."/>
            <person name="Jia C."/>
            <person name="Zhang Y."/>
            <person name="Xu P."/>
        </authorList>
    </citation>
    <scope>IDENTIFICATION BY MASS SPECTROMETRY</scope>
</reference>
<proteinExistence type="evidence at protein level"/>
<dbReference type="EMBL" id="Z36099">
    <property type="status" value="NOT_ANNOTATED_CDS"/>
    <property type="molecule type" value="Genomic_DNA"/>
</dbReference>
<dbReference type="EMBL" id="BK006936">
    <property type="protein sequence ID" value="DAA07346.1"/>
    <property type="molecule type" value="Genomic_DNA"/>
</dbReference>
<dbReference type="BioGRID" id="37088">
    <property type="interactions" value="10"/>
</dbReference>
<dbReference type="FunCoup" id="Q3E762">
    <property type="interactions" value="1"/>
</dbReference>
<dbReference type="STRING" id="4932.YBR230W-A"/>
<dbReference type="iPTMnet" id="Q3E762"/>
<dbReference type="PaxDb" id="4932-YBR230W-A"/>
<dbReference type="PeptideAtlas" id="Q3E762"/>
<dbReference type="EnsemblFungi" id="YBR230W-A_mRNA">
    <property type="protein sequence ID" value="YBR230W-A"/>
    <property type="gene ID" value="YBR230W-A"/>
</dbReference>
<dbReference type="KEGG" id="sce:YBR230W-A"/>
<dbReference type="AGR" id="SGD:S000029722"/>
<dbReference type="SGD" id="S000029722">
    <property type="gene designation" value="YBR230W-A"/>
</dbReference>
<dbReference type="VEuPathDB" id="FungiDB:YBR230W-A"/>
<dbReference type="HOGENOM" id="CLU_2832610_0_0_1"/>
<dbReference type="InParanoid" id="Q3E762"/>
<dbReference type="OrthoDB" id="4065689at2759"/>
<dbReference type="BioCyc" id="YEAST:G3O-29272-MONOMER"/>
<dbReference type="BioGRID-ORCS" id="2777172">
    <property type="hits" value="2 hits in 10 CRISPR screens"/>
</dbReference>
<dbReference type="ChiTaRS" id="YBR230W-A">
    <property type="organism name" value="yeast"/>
</dbReference>
<dbReference type="PRO" id="PR:Q3E762"/>
<dbReference type="Proteomes" id="UP000002311">
    <property type="component" value="Chromosome II"/>
</dbReference>
<dbReference type="RNAct" id="Q3E762">
    <property type="molecule type" value="protein"/>
</dbReference>
<dbReference type="Pfam" id="PF23485">
    <property type="entry name" value="YBR230W-A"/>
    <property type="match status" value="1"/>
</dbReference>
<organism>
    <name type="scientific">Saccharomyces cerevisiae (strain ATCC 204508 / S288c)</name>
    <name type="common">Baker's yeast</name>
    <dbReference type="NCBI Taxonomy" id="559292"/>
    <lineage>
        <taxon>Eukaryota</taxon>
        <taxon>Fungi</taxon>
        <taxon>Dikarya</taxon>
        <taxon>Ascomycota</taxon>
        <taxon>Saccharomycotina</taxon>
        <taxon>Saccharomycetes</taxon>
        <taxon>Saccharomycetales</taxon>
        <taxon>Saccharomycetaceae</taxon>
        <taxon>Saccharomyces</taxon>
    </lineage>
</organism>
<feature type="chain" id="PRO_0000248443" description="Uncharacterized protein YBR230W-A">
    <location>
        <begin position="1"/>
        <end position="66"/>
    </location>
</feature>
<gene>
    <name evidence="2" type="ordered locus">YBR230W-A</name>
</gene>
<evidence type="ECO:0000305" key="1"/>
<evidence type="ECO:0000312" key="2">
    <source>
        <dbReference type="SGD" id="S000029722"/>
    </source>
</evidence>